<accession>Q31SV8</accession>
<evidence type="ECO:0000255" key="1">
    <source>
        <dbReference type="HAMAP-Rule" id="MF_00592"/>
    </source>
</evidence>
<comment type="function">
    <text evidence="1">Catalyzes a reversible aldol reaction between acetaldehyde and D-glyceraldehyde 3-phosphate to generate 2-deoxy-D-ribose 5-phosphate.</text>
</comment>
<comment type="catalytic activity">
    <reaction evidence="1">
        <text>2-deoxy-D-ribose 5-phosphate = D-glyceraldehyde 3-phosphate + acetaldehyde</text>
        <dbReference type="Rhea" id="RHEA:12821"/>
        <dbReference type="ChEBI" id="CHEBI:15343"/>
        <dbReference type="ChEBI" id="CHEBI:59776"/>
        <dbReference type="ChEBI" id="CHEBI:62877"/>
        <dbReference type="EC" id="4.1.2.4"/>
    </reaction>
</comment>
<comment type="pathway">
    <text evidence="1">Carbohydrate degradation; 2-deoxy-D-ribose 1-phosphate degradation; D-glyceraldehyde 3-phosphate and acetaldehyde from 2-deoxy-alpha-D-ribose 1-phosphate: step 2/2.</text>
</comment>
<comment type="subcellular location">
    <subcellularLocation>
        <location evidence="1">Cytoplasm</location>
    </subcellularLocation>
</comment>
<comment type="similarity">
    <text evidence="1">Belongs to the DeoC/FbaB aldolase family. DeoC type 2 subfamily.</text>
</comment>
<organism>
    <name type="scientific">Shigella boydii serotype 4 (strain Sb227)</name>
    <dbReference type="NCBI Taxonomy" id="300268"/>
    <lineage>
        <taxon>Bacteria</taxon>
        <taxon>Pseudomonadati</taxon>
        <taxon>Pseudomonadota</taxon>
        <taxon>Gammaproteobacteria</taxon>
        <taxon>Enterobacterales</taxon>
        <taxon>Enterobacteriaceae</taxon>
        <taxon>Shigella</taxon>
    </lineage>
</organism>
<reference key="1">
    <citation type="journal article" date="2005" name="Nucleic Acids Res.">
        <title>Genome dynamics and diversity of Shigella species, the etiologic agents of bacillary dysentery.</title>
        <authorList>
            <person name="Yang F."/>
            <person name="Yang J."/>
            <person name="Zhang X."/>
            <person name="Chen L."/>
            <person name="Jiang Y."/>
            <person name="Yan Y."/>
            <person name="Tang X."/>
            <person name="Wang J."/>
            <person name="Xiong Z."/>
            <person name="Dong J."/>
            <person name="Xue Y."/>
            <person name="Zhu Y."/>
            <person name="Xu X."/>
            <person name="Sun L."/>
            <person name="Chen S."/>
            <person name="Nie H."/>
            <person name="Peng J."/>
            <person name="Xu J."/>
            <person name="Wang Y."/>
            <person name="Yuan Z."/>
            <person name="Wen Y."/>
            <person name="Yao Z."/>
            <person name="Shen Y."/>
            <person name="Qiang B."/>
            <person name="Hou Y."/>
            <person name="Yu J."/>
            <person name="Jin Q."/>
        </authorList>
    </citation>
    <scope>NUCLEOTIDE SEQUENCE [LARGE SCALE GENOMIC DNA]</scope>
    <source>
        <strain>Sb227</strain>
    </source>
</reference>
<gene>
    <name evidence="1" type="primary">deoC</name>
    <name type="ordered locus">SBO_4443</name>
</gene>
<name>DEOC_SHIBS</name>
<dbReference type="EC" id="4.1.2.4" evidence="1"/>
<dbReference type="EMBL" id="CP000036">
    <property type="protein sequence ID" value="ABB68850.1"/>
    <property type="molecule type" value="Genomic_DNA"/>
</dbReference>
<dbReference type="RefSeq" id="WP_001365356.1">
    <property type="nucleotide sequence ID" value="NC_007613.1"/>
</dbReference>
<dbReference type="SMR" id="Q31SV8"/>
<dbReference type="KEGG" id="sbo:SBO_4443"/>
<dbReference type="HOGENOM" id="CLU_053595_3_1_6"/>
<dbReference type="UniPathway" id="UPA00002">
    <property type="reaction ID" value="UER00468"/>
</dbReference>
<dbReference type="Proteomes" id="UP000007067">
    <property type="component" value="Chromosome"/>
</dbReference>
<dbReference type="GO" id="GO:0005737">
    <property type="term" value="C:cytoplasm"/>
    <property type="evidence" value="ECO:0007669"/>
    <property type="project" value="UniProtKB-SubCell"/>
</dbReference>
<dbReference type="GO" id="GO:0004139">
    <property type="term" value="F:deoxyribose-phosphate aldolase activity"/>
    <property type="evidence" value="ECO:0007669"/>
    <property type="project" value="UniProtKB-UniRule"/>
</dbReference>
<dbReference type="GO" id="GO:0006018">
    <property type="term" value="P:2-deoxyribose 1-phosphate catabolic process"/>
    <property type="evidence" value="ECO:0007669"/>
    <property type="project" value="UniProtKB-UniRule"/>
</dbReference>
<dbReference type="GO" id="GO:0016052">
    <property type="term" value="P:carbohydrate catabolic process"/>
    <property type="evidence" value="ECO:0007669"/>
    <property type="project" value="TreeGrafter"/>
</dbReference>
<dbReference type="GO" id="GO:0009264">
    <property type="term" value="P:deoxyribonucleotide catabolic process"/>
    <property type="evidence" value="ECO:0007669"/>
    <property type="project" value="InterPro"/>
</dbReference>
<dbReference type="CDD" id="cd00959">
    <property type="entry name" value="DeoC"/>
    <property type="match status" value="1"/>
</dbReference>
<dbReference type="FunFam" id="3.20.20.70:FF:000034">
    <property type="entry name" value="Deoxyribose-phosphate aldolase"/>
    <property type="match status" value="1"/>
</dbReference>
<dbReference type="Gene3D" id="3.20.20.70">
    <property type="entry name" value="Aldolase class I"/>
    <property type="match status" value="1"/>
</dbReference>
<dbReference type="HAMAP" id="MF_00592">
    <property type="entry name" value="DeoC_type2"/>
    <property type="match status" value="1"/>
</dbReference>
<dbReference type="InterPro" id="IPR013785">
    <property type="entry name" value="Aldolase_TIM"/>
</dbReference>
<dbReference type="InterPro" id="IPR011343">
    <property type="entry name" value="DeoC"/>
</dbReference>
<dbReference type="InterPro" id="IPR002915">
    <property type="entry name" value="DeoC/FbaB/LacD_aldolase"/>
</dbReference>
<dbReference type="InterPro" id="IPR023649">
    <property type="entry name" value="DeoC_typeII"/>
</dbReference>
<dbReference type="NCBIfam" id="TIGR00126">
    <property type="entry name" value="deoC"/>
    <property type="match status" value="1"/>
</dbReference>
<dbReference type="PANTHER" id="PTHR10889">
    <property type="entry name" value="DEOXYRIBOSE-PHOSPHATE ALDOLASE"/>
    <property type="match status" value="1"/>
</dbReference>
<dbReference type="PANTHER" id="PTHR10889:SF3">
    <property type="entry name" value="DEOXYRIBOSE-PHOSPHATE ALDOLASE"/>
    <property type="match status" value="1"/>
</dbReference>
<dbReference type="Pfam" id="PF01791">
    <property type="entry name" value="DeoC"/>
    <property type="match status" value="1"/>
</dbReference>
<dbReference type="PIRSF" id="PIRSF001357">
    <property type="entry name" value="DeoC"/>
    <property type="match status" value="1"/>
</dbReference>
<dbReference type="SMART" id="SM01133">
    <property type="entry name" value="DeoC"/>
    <property type="match status" value="1"/>
</dbReference>
<dbReference type="SUPFAM" id="SSF51569">
    <property type="entry name" value="Aldolase"/>
    <property type="match status" value="1"/>
</dbReference>
<protein>
    <recommendedName>
        <fullName evidence="1">Deoxyribose-phosphate aldolase</fullName>
        <shortName evidence="1">DERA</shortName>
        <ecNumber evidence="1">4.1.2.4</ecNumber>
    </recommendedName>
    <alternativeName>
        <fullName evidence="1">2-deoxy-D-ribose 5-phosphate aldolase</fullName>
    </alternativeName>
    <alternativeName>
        <fullName evidence="1">Phosphodeoxyriboaldolase</fullName>
        <shortName evidence="1">Deoxyriboaldolase</shortName>
    </alternativeName>
</protein>
<feature type="chain" id="PRO_1000072612" description="Deoxyribose-phosphate aldolase">
    <location>
        <begin position="1"/>
        <end position="259"/>
    </location>
</feature>
<feature type="active site" description="Proton donor/acceptor" evidence="1">
    <location>
        <position position="102"/>
    </location>
</feature>
<feature type="active site" description="Schiff-base intermediate with acetaldehyde" evidence="1">
    <location>
        <position position="167"/>
    </location>
</feature>
<feature type="active site" description="Proton donor/acceptor" evidence="1">
    <location>
        <position position="201"/>
    </location>
</feature>
<keyword id="KW-0963">Cytoplasm</keyword>
<keyword id="KW-0456">Lyase</keyword>
<keyword id="KW-0704">Schiff base</keyword>
<proteinExistence type="inferred from homology"/>
<sequence>MTDLKASSLRALKLMDLTTLNDDDTDEKVIALCHQTKTPVGNTAAICIYPRFIPIARKTLKEQGTPEIRIATVTNFPHGNDDIEIALAETRAAIAYGADEVDVVFPYRALMAGNEQVGFDLVKACKEACAAANVLLKVIIETGELKDEALIRKASEISIKAGADFIKTSTGKVAVNATPESARIMMEVIRDMGVEKTVGFKPAGGVRTAEDAQKYLAIADELFGADWADARHYRFGASSLLASLLKALGHGDGKSASSY</sequence>